<protein>
    <recommendedName>
        <fullName>Colicin-E6 immunity protein</fullName>
    </recommendedName>
    <alternativeName>
        <fullName>ImmE6</fullName>
    </alternativeName>
    <alternativeName>
        <fullName>Microcin-E6 immunity protein</fullName>
    </alternativeName>
</protein>
<keyword id="KW-0079">Bacteriocin immunity</keyword>
<keyword id="KW-0614">Plasmid</keyword>
<name>IMM6_ECOLX</name>
<gene>
    <name type="primary">imm</name>
    <name type="synonym">ceiE6</name>
</gene>
<sequence>MGLKLHINWFDKRTEEFKGGEYSKDFGDDGSVIERLGMPFKDNINNGWFDVIAEWVPLLQPYFNHQIDISDNEYFVSFDYRDGDW</sequence>
<feature type="chain" id="PRO_0000218707" description="Colicin-E6 immunity protein">
    <location>
        <begin position="1"/>
        <end position="85"/>
    </location>
</feature>
<feature type="sequence conflict" description="In Ref. 2; AAA23081." evidence="1" ref="2">
    <original>R</original>
    <variation>T</variation>
    <location>
        <position position="13"/>
    </location>
</feature>
<feature type="sequence conflict" description="In Ref. 2; AAA23081." evidence="1" ref="2">
    <original>F</original>
    <variation>L</variation>
    <location>
        <position position="40"/>
    </location>
</feature>
<accession>P13477</accession>
<evidence type="ECO:0000305" key="1"/>
<geneLocation type="plasmid">
    <name>ColE6-CT14</name>
</geneLocation>
<organism>
    <name type="scientific">Escherichia coli</name>
    <dbReference type="NCBI Taxonomy" id="562"/>
    <lineage>
        <taxon>Bacteria</taxon>
        <taxon>Pseudomonadati</taxon>
        <taxon>Pseudomonadota</taxon>
        <taxon>Gammaproteobacteria</taxon>
        <taxon>Enterobacterales</taxon>
        <taxon>Enterobacteriaceae</taxon>
        <taxon>Escherichia</taxon>
    </lineage>
</organism>
<comment type="function">
    <text>This protein inhibits the 16S RNA hydrolyzing activity of colicin E6 by binding with high affinity to the C-terminal catalytic domain of E6. This protein is able to protect a cell, which harbors the plasmid ColE6 against colicin E6.</text>
</comment>
<comment type="similarity">
    <text evidence="1">Belongs to the cloacin immunity protein family.</text>
</comment>
<reference key="1">
    <citation type="journal article" date="1989" name="Mol. Gen. Genet.">
        <title>Nucleotide sequences from the colicin E5, E6 and E9 operons: presence of a degenerate transposon-like structure in the ColE9-J plasmid.</title>
        <authorList>
            <person name="Lau P.C.K."/>
            <person name="Condie J.A."/>
        </authorList>
    </citation>
    <scope>NUCLEOTIDE SEQUENCE [GENOMIC DNA]</scope>
</reference>
<reference key="2">
    <citation type="journal article" date="1989" name="J. Bacteriol.">
        <title>Molecular structure and immunity specificity of colicin E6, an evolutionary intermediate between E-group colicins and cloacin DF13.</title>
        <authorList>
            <person name="Akutsu A."/>
            <person name="Masaki H."/>
            <person name="Ohta T."/>
        </authorList>
    </citation>
    <scope>NUCLEOTIDE SEQUENCE [GENOMIC DNA]</scope>
</reference>
<proteinExistence type="inferred from homology"/>
<dbReference type="EMBL" id="X15856">
    <property type="protein sequence ID" value="CAA33856.1"/>
    <property type="molecule type" value="Genomic_DNA"/>
</dbReference>
<dbReference type="EMBL" id="M31808">
    <property type="protein sequence ID" value="AAA23081.1"/>
    <property type="molecule type" value="Genomic_DNA"/>
</dbReference>
<dbReference type="PIR" id="JQ0326">
    <property type="entry name" value="JQ0326"/>
</dbReference>
<dbReference type="SMR" id="P13477"/>
<dbReference type="GO" id="GO:0015643">
    <property type="term" value="F:toxic substance binding"/>
    <property type="evidence" value="ECO:0007669"/>
    <property type="project" value="InterPro"/>
</dbReference>
<dbReference type="GO" id="GO:0030153">
    <property type="term" value="P:bacteriocin immunity"/>
    <property type="evidence" value="ECO:0007669"/>
    <property type="project" value="UniProtKB-KW"/>
</dbReference>
<dbReference type="Gene3D" id="3.10.50.20">
    <property type="entry name" value="Cloacin immunity protein"/>
    <property type="match status" value="1"/>
</dbReference>
<dbReference type="InterPro" id="IPR003063">
    <property type="entry name" value="Cloacn_immnty_fam"/>
</dbReference>
<dbReference type="InterPro" id="IPR036528">
    <property type="entry name" value="Cloacn_immnty_sf"/>
</dbReference>
<dbReference type="Pfam" id="PF03513">
    <property type="entry name" value="Cloacin_immun"/>
    <property type="match status" value="1"/>
</dbReference>
<dbReference type="PRINTS" id="PR01296">
    <property type="entry name" value="CLOACNIMMNTY"/>
</dbReference>
<dbReference type="SUPFAM" id="SSF54552">
    <property type="entry name" value="Colicin E3 immunity protein"/>
    <property type="match status" value="1"/>
</dbReference>